<dbReference type="EMBL" id="CP000450">
    <property type="protein sequence ID" value="ABI58581.1"/>
    <property type="molecule type" value="Genomic_DNA"/>
</dbReference>
<dbReference type="RefSeq" id="WP_011110871.1">
    <property type="nucleotide sequence ID" value="NC_008344.1"/>
</dbReference>
<dbReference type="SMR" id="Q0AJ90"/>
<dbReference type="STRING" id="335283.Neut_0297"/>
<dbReference type="GeneID" id="87103433"/>
<dbReference type="KEGG" id="net:Neut_0297"/>
<dbReference type="eggNOG" id="COG0828">
    <property type="taxonomic scope" value="Bacteria"/>
</dbReference>
<dbReference type="HOGENOM" id="CLU_159258_1_2_4"/>
<dbReference type="OrthoDB" id="9799244at2"/>
<dbReference type="Proteomes" id="UP000001966">
    <property type="component" value="Chromosome"/>
</dbReference>
<dbReference type="GO" id="GO:1990904">
    <property type="term" value="C:ribonucleoprotein complex"/>
    <property type="evidence" value="ECO:0007669"/>
    <property type="project" value="UniProtKB-KW"/>
</dbReference>
<dbReference type="GO" id="GO:0005840">
    <property type="term" value="C:ribosome"/>
    <property type="evidence" value="ECO:0007669"/>
    <property type="project" value="UniProtKB-KW"/>
</dbReference>
<dbReference type="GO" id="GO:0003735">
    <property type="term" value="F:structural constituent of ribosome"/>
    <property type="evidence" value="ECO:0007669"/>
    <property type="project" value="InterPro"/>
</dbReference>
<dbReference type="GO" id="GO:0006412">
    <property type="term" value="P:translation"/>
    <property type="evidence" value="ECO:0007669"/>
    <property type="project" value="UniProtKB-UniRule"/>
</dbReference>
<dbReference type="Gene3D" id="1.20.5.1150">
    <property type="entry name" value="Ribosomal protein S8"/>
    <property type="match status" value="1"/>
</dbReference>
<dbReference type="HAMAP" id="MF_00358">
    <property type="entry name" value="Ribosomal_bS21"/>
    <property type="match status" value="1"/>
</dbReference>
<dbReference type="InterPro" id="IPR001911">
    <property type="entry name" value="Ribosomal_bS21"/>
</dbReference>
<dbReference type="InterPro" id="IPR038380">
    <property type="entry name" value="Ribosomal_bS21_sf"/>
</dbReference>
<dbReference type="NCBIfam" id="TIGR00030">
    <property type="entry name" value="S21p"/>
    <property type="match status" value="1"/>
</dbReference>
<dbReference type="PANTHER" id="PTHR21109">
    <property type="entry name" value="MITOCHONDRIAL 28S RIBOSOMAL PROTEIN S21"/>
    <property type="match status" value="1"/>
</dbReference>
<dbReference type="PANTHER" id="PTHR21109:SF22">
    <property type="entry name" value="SMALL RIBOSOMAL SUBUNIT PROTEIN BS21"/>
    <property type="match status" value="1"/>
</dbReference>
<dbReference type="Pfam" id="PF01165">
    <property type="entry name" value="Ribosomal_S21"/>
    <property type="match status" value="1"/>
</dbReference>
<dbReference type="PRINTS" id="PR00976">
    <property type="entry name" value="RIBOSOMALS21"/>
</dbReference>
<proteinExistence type="inferred from homology"/>
<reference key="1">
    <citation type="journal article" date="2007" name="Environ. Microbiol.">
        <title>Whole-genome analysis of the ammonia-oxidizing bacterium, Nitrosomonas eutropha C91: implications for niche adaptation.</title>
        <authorList>
            <person name="Stein L.Y."/>
            <person name="Arp D.J."/>
            <person name="Berube P.M."/>
            <person name="Chain P.S."/>
            <person name="Hauser L."/>
            <person name="Jetten M.S."/>
            <person name="Klotz M.G."/>
            <person name="Larimer F.W."/>
            <person name="Norton J.M."/>
            <person name="Op den Camp H.J.M."/>
            <person name="Shin M."/>
            <person name="Wei X."/>
        </authorList>
    </citation>
    <scope>NUCLEOTIDE SEQUENCE [LARGE SCALE GENOMIC DNA]</scope>
    <source>
        <strain>DSM 101675 / C91 / Nm57</strain>
    </source>
</reference>
<comment type="similarity">
    <text evidence="1">Belongs to the bacterial ribosomal protein bS21 family.</text>
</comment>
<accession>Q0AJ90</accession>
<keyword id="KW-0687">Ribonucleoprotein</keyword>
<keyword id="KW-0689">Ribosomal protein</keyword>
<protein>
    <recommendedName>
        <fullName evidence="1">Small ribosomal subunit protein bS21</fullName>
    </recommendedName>
    <alternativeName>
        <fullName evidence="2">30S ribosomal protein S21</fullName>
    </alternativeName>
</protein>
<evidence type="ECO:0000255" key="1">
    <source>
        <dbReference type="HAMAP-Rule" id="MF_00358"/>
    </source>
</evidence>
<evidence type="ECO:0000305" key="2"/>
<feature type="chain" id="PRO_1000005139" description="Small ribosomal subunit protein bS21">
    <location>
        <begin position="1"/>
        <end position="70"/>
    </location>
</feature>
<sequence length="70" mass="8424">MTTVKVKENEPFEIAMRRFKRSIEKTGLLTELRAREFYEKPTAVRKRKHAAAVKRTYKRLRSQMLPPKLY</sequence>
<organism>
    <name type="scientific">Nitrosomonas eutropha (strain DSM 101675 / C91 / Nm57)</name>
    <dbReference type="NCBI Taxonomy" id="335283"/>
    <lineage>
        <taxon>Bacteria</taxon>
        <taxon>Pseudomonadati</taxon>
        <taxon>Pseudomonadota</taxon>
        <taxon>Betaproteobacteria</taxon>
        <taxon>Nitrosomonadales</taxon>
        <taxon>Nitrosomonadaceae</taxon>
        <taxon>Nitrosomonas</taxon>
    </lineage>
</organism>
<name>RS21_NITEC</name>
<gene>
    <name evidence="1" type="primary">rpsU</name>
    <name type="ordered locus">Neut_0297</name>
</gene>